<keyword id="KW-0002">3D-structure</keyword>
<keyword id="KW-0028">Amino-acid biosynthesis</keyword>
<keyword id="KW-0963">Cytoplasm</keyword>
<keyword id="KW-0220">Diaminopimelate biosynthesis</keyword>
<keyword id="KW-0457">Lysine biosynthesis</keyword>
<keyword id="KW-0520">NAD</keyword>
<keyword id="KW-0521">NADP</keyword>
<keyword id="KW-0560">Oxidoreductase</keyword>
<evidence type="ECO:0000255" key="1">
    <source>
        <dbReference type="HAMAP-Rule" id="MF_00102"/>
    </source>
</evidence>
<evidence type="ECO:0000305" key="2"/>
<evidence type="ECO:0007829" key="3">
    <source>
        <dbReference type="PDB" id="3QY9"/>
    </source>
</evidence>
<name>DAPB_STAAC</name>
<comment type="function">
    <text evidence="1">Catalyzes the conversion of 4-hydroxy-tetrahydrodipicolinate (HTPA) to tetrahydrodipicolinate.</text>
</comment>
<comment type="catalytic activity">
    <reaction evidence="1">
        <text>(S)-2,3,4,5-tetrahydrodipicolinate + NAD(+) + H2O = (2S,4S)-4-hydroxy-2,3,4,5-tetrahydrodipicolinate + NADH + H(+)</text>
        <dbReference type="Rhea" id="RHEA:35323"/>
        <dbReference type="ChEBI" id="CHEBI:15377"/>
        <dbReference type="ChEBI" id="CHEBI:15378"/>
        <dbReference type="ChEBI" id="CHEBI:16845"/>
        <dbReference type="ChEBI" id="CHEBI:57540"/>
        <dbReference type="ChEBI" id="CHEBI:57945"/>
        <dbReference type="ChEBI" id="CHEBI:67139"/>
        <dbReference type="EC" id="1.17.1.8"/>
    </reaction>
</comment>
<comment type="catalytic activity">
    <reaction evidence="1">
        <text>(S)-2,3,4,5-tetrahydrodipicolinate + NADP(+) + H2O = (2S,4S)-4-hydroxy-2,3,4,5-tetrahydrodipicolinate + NADPH + H(+)</text>
        <dbReference type="Rhea" id="RHEA:35331"/>
        <dbReference type="ChEBI" id="CHEBI:15377"/>
        <dbReference type="ChEBI" id="CHEBI:15378"/>
        <dbReference type="ChEBI" id="CHEBI:16845"/>
        <dbReference type="ChEBI" id="CHEBI:57783"/>
        <dbReference type="ChEBI" id="CHEBI:58349"/>
        <dbReference type="ChEBI" id="CHEBI:67139"/>
        <dbReference type="EC" id="1.17.1.8"/>
    </reaction>
</comment>
<comment type="pathway">
    <text evidence="1">Amino-acid biosynthesis; L-lysine biosynthesis via DAP pathway; (S)-tetrahydrodipicolinate from L-aspartate: step 4/4.</text>
</comment>
<comment type="interaction">
    <interactant intactId="EBI-7045745">
        <id>Q5HG24</id>
    </interactant>
    <interactant intactId="EBI-7045745">
        <id>Q5HG24</id>
        <label>dapB</label>
    </interactant>
    <organismsDiffer>false</organismsDiffer>
    <experiments>3</experiments>
</comment>
<comment type="subcellular location">
    <subcellularLocation>
        <location evidence="1">Cytoplasm</location>
    </subcellularLocation>
</comment>
<comment type="similarity">
    <text evidence="1">Belongs to the DapB family.</text>
</comment>
<comment type="caution">
    <text evidence="2">Was originally thought to be a dihydrodipicolinate reductase (DHDPR), catalyzing the conversion of dihydrodipicolinate to tetrahydrodipicolinate. However, it was shown in E.coli that the substrate of the enzymatic reaction is not dihydrodipicolinate (DHDP) but in fact (2S,4S)-4-hydroxy-2,3,4,5-tetrahydrodipicolinic acid (HTPA), the product released by the DapA-catalyzed reaction.</text>
</comment>
<sequence>MKILLIGYGAMNQRVARLAEEKGHEIVGVIENTPKATTPYQQYQHIADVKGADVAIDFSNPNLLFPLLDEDFHLPLVVATTGEKEKLLNKLDELSQNMPVFFSANMSYGVHALTKILAAAVPLLDDFDIELTEAHHNKKVDAPSGTLEKLYDVIVSLKENVTPVYDRHELNEKRQPQDIGIHSIRGGTIVGEHEVLFAGTDETIQITHRAQSKDIFANGAIQAAERLVNKPNGFYTFDNL</sequence>
<feature type="chain" id="PRO_0000141485" description="4-hydroxy-tetrahydrodipicolinate reductase">
    <location>
        <begin position="1"/>
        <end position="240"/>
    </location>
</feature>
<feature type="active site" description="Proton donor/acceptor" evidence="1">
    <location>
        <position position="135"/>
    </location>
</feature>
<feature type="active site" description="Proton donor" evidence="1">
    <location>
        <position position="139"/>
    </location>
</feature>
<feature type="binding site" evidence="1">
    <location>
        <begin position="79"/>
        <end position="81"/>
    </location>
    <ligand>
        <name>NAD(+)</name>
        <dbReference type="ChEBI" id="CHEBI:57540"/>
    </ligand>
</feature>
<feature type="binding site" evidence="1">
    <location>
        <begin position="103"/>
        <end position="106"/>
    </location>
    <ligand>
        <name>NAD(+)</name>
        <dbReference type="ChEBI" id="CHEBI:57540"/>
    </ligand>
</feature>
<feature type="binding site" evidence="1">
    <location>
        <position position="136"/>
    </location>
    <ligand>
        <name>(S)-2,3,4,5-tetrahydrodipicolinate</name>
        <dbReference type="ChEBI" id="CHEBI:16845"/>
    </ligand>
</feature>
<feature type="binding site" evidence="1">
    <location>
        <begin position="145"/>
        <end position="146"/>
    </location>
    <ligand>
        <name>(S)-2,3,4,5-tetrahydrodipicolinate</name>
        <dbReference type="ChEBI" id="CHEBI:16845"/>
    </ligand>
</feature>
<feature type="strand" evidence="3">
    <location>
        <begin position="2"/>
        <end position="6"/>
    </location>
</feature>
<feature type="helix" evidence="3">
    <location>
        <begin position="10"/>
        <end position="21"/>
    </location>
</feature>
<feature type="strand" evidence="3">
    <location>
        <begin position="25"/>
        <end position="30"/>
    </location>
</feature>
<feature type="turn" evidence="3">
    <location>
        <begin position="46"/>
        <end position="48"/>
    </location>
</feature>
<feature type="strand" evidence="3">
    <location>
        <begin position="53"/>
        <end position="57"/>
    </location>
</feature>
<feature type="helix" evidence="3">
    <location>
        <begin position="61"/>
        <end position="68"/>
    </location>
</feature>
<feature type="strand" evidence="3">
    <location>
        <begin position="76"/>
        <end position="78"/>
    </location>
</feature>
<feature type="helix" evidence="3">
    <location>
        <begin position="84"/>
        <end position="94"/>
    </location>
</feature>
<feature type="turn" evidence="3">
    <location>
        <begin position="95"/>
        <end position="97"/>
    </location>
</feature>
<feature type="strand" evidence="3">
    <location>
        <begin position="98"/>
        <end position="102"/>
    </location>
</feature>
<feature type="helix" evidence="3">
    <location>
        <begin position="108"/>
        <end position="123"/>
    </location>
</feature>
<feature type="turn" evidence="3">
    <location>
        <begin position="124"/>
        <end position="126"/>
    </location>
</feature>
<feature type="strand" evidence="3">
    <location>
        <begin position="127"/>
        <end position="135"/>
    </location>
</feature>
<feature type="strand" evidence="3">
    <location>
        <begin position="141"/>
        <end position="143"/>
    </location>
</feature>
<feature type="helix" evidence="3">
    <location>
        <begin position="145"/>
        <end position="157"/>
    </location>
</feature>
<feature type="strand" evidence="3">
    <location>
        <begin position="162"/>
        <end position="164"/>
    </location>
</feature>
<feature type="turn" evidence="3">
    <location>
        <begin position="168"/>
        <end position="170"/>
    </location>
</feature>
<feature type="strand" evidence="3">
    <location>
        <begin position="178"/>
        <end position="185"/>
    </location>
</feature>
<feature type="strand" evidence="3">
    <location>
        <begin position="191"/>
        <end position="198"/>
    </location>
</feature>
<feature type="strand" evidence="3">
    <location>
        <begin position="200"/>
        <end position="211"/>
    </location>
</feature>
<feature type="helix" evidence="3">
    <location>
        <begin position="214"/>
        <end position="227"/>
    </location>
</feature>
<feature type="strand" evidence="3">
    <location>
        <begin position="232"/>
        <end position="235"/>
    </location>
</feature>
<feature type="turn" evidence="3">
    <location>
        <begin position="237"/>
        <end position="239"/>
    </location>
</feature>
<reference key="1">
    <citation type="journal article" date="2005" name="J. Bacteriol.">
        <title>Insights on evolution of virulence and resistance from the complete genome analysis of an early methicillin-resistant Staphylococcus aureus strain and a biofilm-producing methicillin-resistant Staphylococcus epidermidis strain.</title>
        <authorList>
            <person name="Gill S.R."/>
            <person name="Fouts D.E."/>
            <person name="Archer G.L."/>
            <person name="Mongodin E.F."/>
            <person name="DeBoy R.T."/>
            <person name="Ravel J."/>
            <person name="Paulsen I.T."/>
            <person name="Kolonay J.F."/>
            <person name="Brinkac L.M."/>
            <person name="Beanan M.J."/>
            <person name="Dodson R.J."/>
            <person name="Daugherty S.C."/>
            <person name="Madupu R."/>
            <person name="Angiuoli S.V."/>
            <person name="Durkin A.S."/>
            <person name="Haft D.H."/>
            <person name="Vamathevan J.J."/>
            <person name="Khouri H."/>
            <person name="Utterback T.R."/>
            <person name="Lee C."/>
            <person name="Dimitrov G."/>
            <person name="Jiang L."/>
            <person name="Qin H."/>
            <person name="Weidman J."/>
            <person name="Tran K."/>
            <person name="Kang K.H."/>
            <person name="Hance I.R."/>
            <person name="Nelson K.E."/>
            <person name="Fraser C.M."/>
        </authorList>
    </citation>
    <scope>NUCLEOTIDE SEQUENCE [LARGE SCALE GENOMIC DNA]</scope>
    <source>
        <strain>COL</strain>
    </source>
</reference>
<proteinExistence type="evidence at protein level"/>
<gene>
    <name evidence="1" type="primary">dapB</name>
    <name type="ordered locus">SACOL1431</name>
</gene>
<protein>
    <recommendedName>
        <fullName evidence="1">4-hydroxy-tetrahydrodipicolinate reductase</fullName>
        <shortName evidence="1">HTPA reductase</shortName>
        <ecNumber evidence="1">1.17.1.8</ecNumber>
    </recommendedName>
</protein>
<organism>
    <name type="scientific">Staphylococcus aureus (strain COL)</name>
    <dbReference type="NCBI Taxonomy" id="93062"/>
    <lineage>
        <taxon>Bacteria</taxon>
        <taxon>Bacillati</taxon>
        <taxon>Bacillota</taxon>
        <taxon>Bacilli</taxon>
        <taxon>Bacillales</taxon>
        <taxon>Staphylococcaceae</taxon>
        <taxon>Staphylococcus</taxon>
    </lineage>
</organism>
<accession>Q5HG24</accession>
<dbReference type="EC" id="1.17.1.8" evidence="1"/>
<dbReference type="EMBL" id="CP000046">
    <property type="protein sequence ID" value="AAW38176.1"/>
    <property type="molecule type" value="Genomic_DNA"/>
</dbReference>
<dbReference type="RefSeq" id="WP_000698235.1">
    <property type="nucleotide sequence ID" value="NZ_JBGOFO010000003.1"/>
</dbReference>
<dbReference type="PDB" id="3QY9">
    <property type="method" value="X-ray"/>
    <property type="resolution" value="1.80 A"/>
    <property type="chains" value="A/B/C/D=1-240"/>
</dbReference>
<dbReference type="PDBsum" id="3QY9"/>
<dbReference type="SMR" id="Q5HG24"/>
<dbReference type="MINT" id="Q5HG24"/>
<dbReference type="KEGG" id="sac:SACOL1431"/>
<dbReference type="HOGENOM" id="CLU_047479_2_2_9"/>
<dbReference type="BRENDA" id="1.17.1.8">
    <property type="organism ID" value="3352"/>
</dbReference>
<dbReference type="UniPathway" id="UPA00034">
    <property type="reaction ID" value="UER00018"/>
</dbReference>
<dbReference type="EvolutionaryTrace" id="Q5HG24"/>
<dbReference type="Proteomes" id="UP000000530">
    <property type="component" value="Chromosome"/>
</dbReference>
<dbReference type="GO" id="GO:0005829">
    <property type="term" value="C:cytosol"/>
    <property type="evidence" value="ECO:0007669"/>
    <property type="project" value="TreeGrafter"/>
</dbReference>
<dbReference type="GO" id="GO:0008839">
    <property type="term" value="F:4-hydroxy-tetrahydrodipicolinate reductase"/>
    <property type="evidence" value="ECO:0007669"/>
    <property type="project" value="UniProtKB-EC"/>
</dbReference>
<dbReference type="GO" id="GO:0042802">
    <property type="term" value="F:identical protein binding"/>
    <property type="evidence" value="ECO:0000353"/>
    <property type="project" value="IntAct"/>
</dbReference>
<dbReference type="GO" id="GO:0051287">
    <property type="term" value="F:NAD binding"/>
    <property type="evidence" value="ECO:0007669"/>
    <property type="project" value="UniProtKB-UniRule"/>
</dbReference>
<dbReference type="GO" id="GO:0050661">
    <property type="term" value="F:NADP binding"/>
    <property type="evidence" value="ECO:0007669"/>
    <property type="project" value="UniProtKB-UniRule"/>
</dbReference>
<dbReference type="GO" id="GO:0016726">
    <property type="term" value="F:oxidoreductase activity, acting on CH or CH2 groups, NAD or NADP as acceptor"/>
    <property type="evidence" value="ECO:0007669"/>
    <property type="project" value="UniProtKB-UniRule"/>
</dbReference>
<dbReference type="GO" id="GO:0019877">
    <property type="term" value="P:diaminopimelate biosynthetic process"/>
    <property type="evidence" value="ECO:0007669"/>
    <property type="project" value="UniProtKB-UniRule"/>
</dbReference>
<dbReference type="GO" id="GO:0009089">
    <property type="term" value="P:lysine biosynthetic process via diaminopimelate"/>
    <property type="evidence" value="ECO:0007669"/>
    <property type="project" value="UniProtKB-UniRule"/>
</dbReference>
<dbReference type="CDD" id="cd02274">
    <property type="entry name" value="DHDPR_N"/>
    <property type="match status" value="1"/>
</dbReference>
<dbReference type="FunFam" id="3.30.360.10:FF:000009">
    <property type="entry name" value="4-hydroxy-tetrahydrodipicolinate reductase"/>
    <property type="match status" value="1"/>
</dbReference>
<dbReference type="Gene3D" id="3.30.360.10">
    <property type="entry name" value="Dihydrodipicolinate Reductase, domain 2"/>
    <property type="match status" value="1"/>
</dbReference>
<dbReference type="Gene3D" id="3.40.50.720">
    <property type="entry name" value="NAD(P)-binding Rossmann-like Domain"/>
    <property type="match status" value="1"/>
</dbReference>
<dbReference type="HAMAP" id="MF_00102">
    <property type="entry name" value="DapB"/>
    <property type="match status" value="1"/>
</dbReference>
<dbReference type="InterPro" id="IPR022663">
    <property type="entry name" value="DapB_C"/>
</dbReference>
<dbReference type="InterPro" id="IPR000846">
    <property type="entry name" value="DapB_N"/>
</dbReference>
<dbReference type="InterPro" id="IPR022664">
    <property type="entry name" value="DapB_N_CS"/>
</dbReference>
<dbReference type="InterPro" id="IPR023940">
    <property type="entry name" value="DHDPR_bac"/>
</dbReference>
<dbReference type="InterPro" id="IPR036291">
    <property type="entry name" value="NAD(P)-bd_dom_sf"/>
</dbReference>
<dbReference type="NCBIfam" id="TIGR00036">
    <property type="entry name" value="dapB"/>
    <property type="match status" value="1"/>
</dbReference>
<dbReference type="PANTHER" id="PTHR20836:SF7">
    <property type="entry name" value="4-HYDROXY-TETRAHYDRODIPICOLINATE REDUCTASE"/>
    <property type="match status" value="1"/>
</dbReference>
<dbReference type="PANTHER" id="PTHR20836">
    <property type="entry name" value="DIHYDRODIPICOLINATE REDUCTASE"/>
    <property type="match status" value="1"/>
</dbReference>
<dbReference type="Pfam" id="PF05173">
    <property type="entry name" value="DapB_C"/>
    <property type="match status" value="1"/>
</dbReference>
<dbReference type="Pfam" id="PF01113">
    <property type="entry name" value="DapB_N"/>
    <property type="match status" value="1"/>
</dbReference>
<dbReference type="PIRSF" id="PIRSF000161">
    <property type="entry name" value="DHPR"/>
    <property type="match status" value="1"/>
</dbReference>
<dbReference type="SUPFAM" id="SSF55347">
    <property type="entry name" value="Glyceraldehyde-3-phosphate dehydrogenase-like, C-terminal domain"/>
    <property type="match status" value="1"/>
</dbReference>
<dbReference type="SUPFAM" id="SSF51735">
    <property type="entry name" value="NAD(P)-binding Rossmann-fold domains"/>
    <property type="match status" value="1"/>
</dbReference>
<dbReference type="PROSITE" id="PS01298">
    <property type="entry name" value="DAPB"/>
    <property type="match status" value="1"/>
</dbReference>